<evidence type="ECO:0000255" key="1">
    <source>
        <dbReference type="PROSITE-ProRule" id="PRU00303"/>
    </source>
</evidence>
<evidence type="ECO:0000305" key="2"/>
<accession>P50930</accession>
<comment type="subcellular location">
    <subcellularLocation>
        <location evidence="2">Cell outer membrane</location>
        <topology evidence="2">Lipid-anchor</topology>
    </subcellularLocation>
</comment>
<comment type="similarity">
    <text evidence="2">Belongs to the rickettsiale 17 kDa surface antigen family.</text>
</comment>
<keyword id="KW-0998">Cell outer membrane</keyword>
<keyword id="KW-0449">Lipoprotein</keyword>
<keyword id="KW-0472">Membrane</keyword>
<keyword id="KW-0564">Palmitate</keyword>
<keyword id="KW-0732">Signal</keyword>
<protein>
    <recommendedName>
        <fullName>17 kDa surface antigen</fullName>
    </recommendedName>
</protein>
<reference key="1">
    <citation type="submission" date="1994-12" db="EMBL/GenBank/DDBJ databases">
        <title>Rickettsia amblyommii, sp. nov., isolated from the Lone Star tick, Amblyomma americanum (Ixodidae).</title>
        <authorList>
            <person name="Pretzman C.I."/>
            <person name="Stothard D.R."/>
            <person name="Ralph D."/>
            <person name="Clark J.B."/>
            <person name="Fuerst P.A."/>
        </authorList>
    </citation>
    <scope>NUCLEOTIDE SEQUENCE [GENOMIC DNA]</scope>
    <source>
        <strain>Maculatum</strain>
    </source>
</reference>
<gene>
    <name type="primary">omp</name>
</gene>
<sequence>MKLLSKIMVIALATSMLQACNGPGGMNKQGTGTLLGGAGGALLGSQFGKGKGQLVGVGVGALLGAVLGGQIGAGMDEQDRRLAELTSQRALETAPSGSNVEWRNPDNGNYGYVTPNKTYRNSTGQYCREYTQTVVIGGKQQKAYGNACLQPDGQ</sequence>
<proteinExistence type="inferred from homology"/>
<organism>
    <name type="scientific">Rickettsia parkeri</name>
    <dbReference type="NCBI Taxonomy" id="35792"/>
    <lineage>
        <taxon>Bacteria</taxon>
        <taxon>Pseudomonadati</taxon>
        <taxon>Pseudomonadota</taxon>
        <taxon>Alphaproteobacteria</taxon>
        <taxon>Rickettsiales</taxon>
        <taxon>Rickettsiaceae</taxon>
        <taxon>Rickettsieae</taxon>
        <taxon>Rickettsia</taxon>
        <taxon>spotted fever group</taxon>
    </lineage>
</organism>
<feature type="signal peptide" evidence="1">
    <location>
        <begin position="1"/>
        <end position="19"/>
    </location>
</feature>
<feature type="chain" id="PRO_0000018018" description="17 kDa surface antigen">
    <location>
        <begin position="20"/>
        <end position="154" status="greater than"/>
    </location>
</feature>
<feature type="lipid moiety-binding region" description="N-palmitoyl cysteine" evidence="2">
    <location>
        <position position="20"/>
    </location>
</feature>
<feature type="lipid moiety-binding region" description="S-diacylglycerol cysteine" evidence="2">
    <location>
        <position position="20"/>
    </location>
</feature>
<feature type="non-terminal residue">
    <location>
        <position position="154"/>
    </location>
</feature>
<dbReference type="EMBL" id="U17008">
    <property type="protein sequence ID" value="AAA82040.1"/>
    <property type="molecule type" value="Genomic_DNA"/>
</dbReference>
<dbReference type="GO" id="GO:0009279">
    <property type="term" value="C:cell outer membrane"/>
    <property type="evidence" value="ECO:0007669"/>
    <property type="project" value="UniProtKB-SubCell"/>
</dbReference>
<dbReference type="InterPro" id="IPR032635">
    <property type="entry name" value="Anti_2"/>
</dbReference>
<dbReference type="InterPro" id="IPR008816">
    <property type="entry name" value="Gly_zipper_2TM_dom"/>
</dbReference>
<dbReference type="InterPro" id="IPR016364">
    <property type="entry name" value="Surface_antigen_Rickettsia"/>
</dbReference>
<dbReference type="Pfam" id="PF16998">
    <property type="entry name" value="17kDa_Anti_2"/>
    <property type="match status" value="1"/>
</dbReference>
<dbReference type="Pfam" id="PF05433">
    <property type="entry name" value="Rick_17kDa_Anti"/>
    <property type="match status" value="1"/>
</dbReference>
<dbReference type="PIRSF" id="PIRSF002721">
    <property type="entry name" value="Surface_antigen_Rickettsia"/>
    <property type="match status" value="1"/>
</dbReference>
<dbReference type="PROSITE" id="PS51257">
    <property type="entry name" value="PROKAR_LIPOPROTEIN"/>
    <property type="match status" value="1"/>
</dbReference>
<name>17KD_RICPA</name>